<comment type="function">
    <text evidence="1">Acts as a chaperone.</text>
</comment>
<comment type="similarity">
    <text evidence="2">Belongs to the heat shock protein 70 family.</text>
</comment>
<organism>
    <name type="scientific">Synechocystis sp. (strain ATCC 27184 / PCC 6803 / Kazusa)</name>
    <dbReference type="NCBI Taxonomy" id="1111708"/>
    <lineage>
        <taxon>Bacteria</taxon>
        <taxon>Bacillati</taxon>
        <taxon>Cyanobacteriota</taxon>
        <taxon>Cyanophyceae</taxon>
        <taxon>Synechococcales</taxon>
        <taxon>Merismopediaceae</taxon>
        <taxon>Synechocystis</taxon>
    </lineage>
</organism>
<evidence type="ECO:0000250" key="1"/>
<evidence type="ECO:0000305" key="2"/>
<gene>
    <name type="primary">dnaK1</name>
    <name type="ordered locus">sll0058</name>
</gene>
<reference key="1">
    <citation type="journal article" date="1995" name="DNA Res.">
        <title>Sequence analysis of the genome of the unicellular cyanobacterium Synechocystis sp. strain PCC6803. I. Sequence features in the 1 Mb region from map positions 64% to 92% of the genome.</title>
        <authorList>
            <person name="Kaneko T."/>
            <person name="Tanaka A."/>
            <person name="Sato S."/>
            <person name="Kotani H."/>
            <person name="Sazuka T."/>
            <person name="Miyajima N."/>
            <person name="Sugiura M."/>
            <person name="Tabata S."/>
        </authorList>
    </citation>
    <scope>NUCLEOTIDE SEQUENCE [LARGE SCALE GENOMIC DNA]</scope>
    <source>
        <strain>ATCC 27184 / PCC 6803 / N-1</strain>
    </source>
</reference>
<reference key="2">
    <citation type="journal article" date="1996" name="DNA Res.">
        <title>Sequence analysis of the genome of the unicellular cyanobacterium Synechocystis sp. strain PCC6803. II. Sequence determination of the entire genome and assignment of potential protein-coding regions.</title>
        <authorList>
            <person name="Kaneko T."/>
            <person name="Sato S."/>
            <person name="Kotani H."/>
            <person name="Tanaka A."/>
            <person name="Asamizu E."/>
            <person name="Nakamura Y."/>
            <person name="Miyajima N."/>
            <person name="Hirosawa M."/>
            <person name="Sugiura M."/>
            <person name="Sasamoto S."/>
            <person name="Kimura T."/>
            <person name="Hosouchi T."/>
            <person name="Matsuno A."/>
            <person name="Muraki A."/>
            <person name="Nakazaki N."/>
            <person name="Naruo K."/>
            <person name="Okumura S."/>
            <person name="Shimpo S."/>
            <person name="Takeuchi C."/>
            <person name="Wada T."/>
            <person name="Watanabe A."/>
            <person name="Yamada M."/>
            <person name="Yasuda M."/>
            <person name="Tabata S."/>
        </authorList>
    </citation>
    <scope>NUCLEOTIDE SEQUENCE [LARGE SCALE GENOMIC DNA]</scope>
    <source>
        <strain>ATCC 27184 / PCC 6803 / Kazusa</strain>
    </source>
</reference>
<dbReference type="EMBL" id="BA000022">
    <property type="protein sequence ID" value="BAA10290.1"/>
    <property type="molecule type" value="Genomic_DNA"/>
</dbReference>
<dbReference type="PIR" id="S74372">
    <property type="entry name" value="S74372"/>
</dbReference>
<dbReference type="SMR" id="Q55154"/>
<dbReference type="IntAct" id="Q55154">
    <property type="interactions" value="2"/>
</dbReference>
<dbReference type="STRING" id="1148.gene:10499790"/>
<dbReference type="PaxDb" id="1148-1001148"/>
<dbReference type="EnsemblBacteria" id="BAA10290">
    <property type="protein sequence ID" value="BAA10290"/>
    <property type="gene ID" value="BAA10290"/>
</dbReference>
<dbReference type="KEGG" id="syn:sll0058"/>
<dbReference type="eggNOG" id="COG0443">
    <property type="taxonomic scope" value="Bacteria"/>
</dbReference>
<dbReference type="InParanoid" id="Q55154"/>
<dbReference type="PhylomeDB" id="Q55154"/>
<dbReference type="Proteomes" id="UP000001425">
    <property type="component" value="Chromosome"/>
</dbReference>
<dbReference type="GO" id="GO:0005524">
    <property type="term" value="F:ATP binding"/>
    <property type="evidence" value="ECO:0007669"/>
    <property type="project" value="UniProtKB-UniRule"/>
</dbReference>
<dbReference type="GO" id="GO:0016887">
    <property type="term" value="F:ATP hydrolysis activity"/>
    <property type="evidence" value="ECO:0000318"/>
    <property type="project" value="GO_Central"/>
</dbReference>
<dbReference type="GO" id="GO:0140662">
    <property type="term" value="F:ATP-dependent protein folding chaperone"/>
    <property type="evidence" value="ECO:0007669"/>
    <property type="project" value="InterPro"/>
</dbReference>
<dbReference type="GO" id="GO:0031072">
    <property type="term" value="F:heat shock protein binding"/>
    <property type="evidence" value="ECO:0000318"/>
    <property type="project" value="GO_Central"/>
</dbReference>
<dbReference type="GO" id="GO:0044183">
    <property type="term" value="F:protein folding chaperone"/>
    <property type="evidence" value="ECO:0000318"/>
    <property type="project" value="GO_Central"/>
</dbReference>
<dbReference type="GO" id="GO:0051082">
    <property type="term" value="F:unfolded protein binding"/>
    <property type="evidence" value="ECO:0007669"/>
    <property type="project" value="InterPro"/>
</dbReference>
<dbReference type="GO" id="GO:0051085">
    <property type="term" value="P:chaperone cofactor-dependent protein refolding"/>
    <property type="evidence" value="ECO:0000318"/>
    <property type="project" value="GO_Central"/>
</dbReference>
<dbReference type="GO" id="GO:0042026">
    <property type="term" value="P:protein refolding"/>
    <property type="evidence" value="ECO:0000318"/>
    <property type="project" value="GO_Central"/>
</dbReference>
<dbReference type="CDD" id="cd10234">
    <property type="entry name" value="ASKHA_NBD_HSP70_DnaK-like"/>
    <property type="match status" value="1"/>
</dbReference>
<dbReference type="FunFam" id="2.60.34.10:FF:000014">
    <property type="entry name" value="Chaperone protein DnaK HSP70"/>
    <property type="match status" value="1"/>
</dbReference>
<dbReference type="FunFam" id="3.30.420.40:FF:000004">
    <property type="entry name" value="Molecular chaperone DnaK"/>
    <property type="match status" value="1"/>
</dbReference>
<dbReference type="FunFam" id="3.90.640.10:FF:000003">
    <property type="entry name" value="Molecular chaperone DnaK"/>
    <property type="match status" value="1"/>
</dbReference>
<dbReference type="Gene3D" id="3.30.420.40">
    <property type="match status" value="2"/>
</dbReference>
<dbReference type="Gene3D" id="3.90.640.10">
    <property type="entry name" value="Actin, Chain A, domain 4"/>
    <property type="match status" value="1"/>
</dbReference>
<dbReference type="Gene3D" id="2.60.34.10">
    <property type="entry name" value="Substrate Binding Domain Of DNAk, Chain A, domain 1"/>
    <property type="match status" value="1"/>
</dbReference>
<dbReference type="HAMAP" id="MF_00332">
    <property type="entry name" value="DnaK"/>
    <property type="match status" value="1"/>
</dbReference>
<dbReference type="InterPro" id="IPR043129">
    <property type="entry name" value="ATPase_NBD"/>
</dbReference>
<dbReference type="InterPro" id="IPR012725">
    <property type="entry name" value="Chaperone_DnaK"/>
</dbReference>
<dbReference type="InterPro" id="IPR018181">
    <property type="entry name" value="Heat_shock_70_CS"/>
</dbReference>
<dbReference type="InterPro" id="IPR029047">
    <property type="entry name" value="HSP70_peptide-bd_sf"/>
</dbReference>
<dbReference type="InterPro" id="IPR013126">
    <property type="entry name" value="Hsp_70_fam"/>
</dbReference>
<dbReference type="NCBIfam" id="NF001413">
    <property type="entry name" value="PRK00290.1"/>
    <property type="match status" value="1"/>
</dbReference>
<dbReference type="NCBIfam" id="NF009947">
    <property type="entry name" value="PRK13411.1"/>
    <property type="match status" value="1"/>
</dbReference>
<dbReference type="NCBIfam" id="TIGR02350">
    <property type="entry name" value="prok_dnaK"/>
    <property type="match status" value="1"/>
</dbReference>
<dbReference type="PANTHER" id="PTHR19375">
    <property type="entry name" value="HEAT SHOCK PROTEIN 70KDA"/>
    <property type="match status" value="1"/>
</dbReference>
<dbReference type="Pfam" id="PF00012">
    <property type="entry name" value="HSP70"/>
    <property type="match status" value="1"/>
</dbReference>
<dbReference type="PRINTS" id="PR00301">
    <property type="entry name" value="HEATSHOCK70"/>
</dbReference>
<dbReference type="SUPFAM" id="SSF53067">
    <property type="entry name" value="Actin-like ATPase domain"/>
    <property type="match status" value="2"/>
</dbReference>
<dbReference type="SUPFAM" id="SSF100920">
    <property type="entry name" value="Heat shock protein 70kD (HSP70), peptide-binding domain"/>
    <property type="match status" value="1"/>
</dbReference>
<dbReference type="PROSITE" id="PS00297">
    <property type="entry name" value="HSP70_1"/>
    <property type="match status" value="1"/>
</dbReference>
<dbReference type="PROSITE" id="PS00329">
    <property type="entry name" value="HSP70_2"/>
    <property type="match status" value="1"/>
</dbReference>
<dbReference type="PROSITE" id="PS01036">
    <property type="entry name" value="HSP70_3"/>
    <property type="match status" value="1"/>
</dbReference>
<proteinExistence type="inferred from homology"/>
<protein>
    <recommendedName>
        <fullName>Chaperone protein dnaK1</fullName>
    </recommendedName>
    <alternativeName>
        <fullName>HSP70-1</fullName>
    </alternativeName>
    <alternativeName>
        <fullName>Heat shock 70 kDa protein 1</fullName>
    </alternativeName>
    <alternativeName>
        <fullName>Heat shock protein 70-1</fullName>
    </alternativeName>
</protein>
<sequence length="692" mass="75179">MGKVIGIDLGTTNSCASVLEGGKPIVITNTEGGRTTPSIVGFTKGSQRLVGQLAKRQSVTNAENTVYSIKRFIGRRWDDTVEERSRVPYNCVKGRDDTVSVSIRGQSYTPQEISAMILQKLKADSEAFLGEPVTQAVITVPAYFTDAQRQATKDAGTIAGLEVLRIINEPTAAALAYGLDKQETEELILVFDLGGGTFDVSLLQLGNGVFEVLSTSGNNHLGGDDFDNCVVQWMAESFKQKENIDLSTDKMAIQRLREAAEKAKIELSSMLNTTINLPFITADESGPKHLEMELARSQFEELTKQLLEDTRVPLTQALDDGEIRASDVHRVILVGGSTRIPAIQRVIQEFFPDSQLERSVNPDEAVALGAAIQAGVIGGEVEDVLLLDVTPLSLGLETLGEVTTKIIERNTTIPTSRSEVFSTAVDGQTSVEIHVIQGERAMARDNKSLGKFLLAGIPPAPRGMPQIEVSFEIDVNGILKVSAQDQGTGKEQSIVISHTGGLSGGEIEKMRQEAQQYAAQDQLRLRMMELQNQADSLFHTYETTLQESGELVREELKSSGKQKKDQLAIALRTPNTPVEKLQTLVEEFRQIILLIGTEVYQQGKGAASNEFANFVQGTSSGTSQMIESLETNLNPIQASSGITMTPGTMINGTVNPGGMDYVETAPVYGLDDGEEFDFDADETVYSDYEAID</sequence>
<name>DNAK1_SYNY3</name>
<feature type="chain" id="PRO_0000078568" description="Chaperone protein dnaK1">
    <location>
        <begin position="1"/>
        <end position="692"/>
    </location>
</feature>
<feature type="modified residue" description="Phosphothreonine; by autocatalysis" evidence="1">
    <location>
        <position position="197"/>
    </location>
</feature>
<accession>Q55154</accession>
<keyword id="KW-0067">ATP-binding</keyword>
<keyword id="KW-0143">Chaperone</keyword>
<keyword id="KW-0547">Nucleotide-binding</keyword>
<keyword id="KW-0597">Phosphoprotein</keyword>
<keyword id="KW-1185">Reference proteome</keyword>
<keyword id="KW-0346">Stress response</keyword>